<accession>M4C699</accession>
<accession>E6YE64</accession>
<comment type="function">
    <text evidence="4">Secreted effector that acts as an elicitor of hypersensitive response (HR) specifically on plants carrying defense protein RPP5.</text>
</comment>
<comment type="subcellular location">
    <subcellularLocation>
        <location evidence="7">Secreted</location>
    </subcellularLocation>
    <subcellularLocation>
        <location evidence="7">Host cell</location>
    </subcellularLocation>
</comment>
<comment type="induction">
    <text evidence="4">Expressed in spores as well as during host plant infection.</text>
</comment>
<comment type="domain">
    <text evidence="7">Has the canonical EER motif, but lacks the canonical translocation motif RxLR, which characterizes most oomycete effectors identified so far. The EER motif is not required to trigger an RPP5-dependent immune response.</text>
</comment>
<comment type="miscellaneous">
    <text evidence="4">The ATR5 effector protein is a polymorphic member of the RXLR class and displays copy-number variation among different isolates of H.arabidopsidis.</text>
</comment>
<comment type="similarity">
    <text evidence="6">Belongs to the RxLR effector family.</text>
</comment>
<keyword id="KW-0325">Glycoprotein</keyword>
<keyword id="KW-1185">Reference proteome</keyword>
<keyword id="KW-0964">Secreted</keyword>
<keyword id="KW-0732">Signal</keyword>
<keyword id="KW-0843">Virulence</keyword>
<name>ATR5_HYAAE</name>
<gene>
    <name evidence="5" type="primary">ATR5</name>
</gene>
<organism>
    <name type="scientific">Hyaloperonospora arabidopsidis (strain Emoy2)</name>
    <name type="common">Downy mildew agent</name>
    <name type="synonym">Peronospora arabidopsidis</name>
    <dbReference type="NCBI Taxonomy" id="559515"/>
    <lineage>
        <taxon>Eukaryota</taxon>
        <taxon>Sar</taxon>
        <taxon>Stramenopiles</taxon>
        <taxon>Oomycota</taxon>
        <taxon>Peronosporales</taxon>
        <taxon>Peronosporaceae</taxon>
        <taxon>Hyaloperonospora</taxon>
    </lineage>
</organism>
<reference key="1">
    <citation type="journal article" date="2011" name="Mol. Plant Microbe Interact.">
        <title>Molecular cloning of ATR5(Emoy2) from Hyaloperonospora arabidopsidis, an avirulence determinant that triggers RPP5-mediated defense in Arabidopsis.</title>
        <authorList>
            <person name="Bailey K."/>
            <person name="Cevik V."/>
            <person name="Holton N."/>
            <person name="Byrne-Richardson J."/>
            <person name="Sohn K.H."/>
            <person name="Coates M."/>
            <person name="Woods-Toer A."/>
            <person name="Aksoy H.M."/>
            <person name="Hughes L."/>
            <person name="Baxter L."/>
            <person name="Jones J.D."/>
            <person name="Beynon J."/>
            <person name="Holub E.B."/>
            <person name="Toer M."/>
        </authorList>
    </citation>
    <scope>NUCLEOTIDE SEQUENCE [GENOMIC DNA]</scope>
    <scope>FUNCTION</scope>
    <scope>DOMAIN</scope>
    <scope>INDUCTION</scope>
    <source>
        <strain>Emoy2</strain>
    </source>
</reference>
<reference key="2">
    <citation type="journal article" date="2010" name="Science">
        <title>Signatures of adaptation to obligate biotrophy in the Hyaloperonospora arabidopsidis genome.</title>
        <authorList>
            <person name="Baxter L."/>
            <person name="Tripathy S."/>
            <person name="Ishaque N."/>
            <person name="Boot N."/>
            <person name="Cabral A."/>
            <person name="Kemen E."/>
            <person name="Thines M."/>
            <person name="Ah-Fong A."/>
            <person name="Anderson R."/>
            <person name="Badejoko W."/>
            <person name="Bittner-Eddy P."/>
            <person name="Boore J.L."/>
            <person name="Chibucos M.C."/>
            <person name="Coates M."/>
            <person name="Dehal P."/>
            <person name="Delehaunty K."/>
            <person name="Dong S."/>
            <person name="Downton P."/>
            <person name="Dumas B."/>
            <person name="Fabro G."/>
            <person name="Fronick C."/>
            <person name="Fuerstenberg S.I."/>
            <person name="Fulton L."/>
            <person name="Gaulin E."/>
            <person name="Govers F."/>
            <person name="Hughes L."/>
            <person name="Humphray S."/>
            <person name="Jiang R.H."/>
            <person name="Judelson H."/>
            <person name="Kamoun S."/>
            <person name="Kyung K."/>
            <person name="Meijer H."/>
            <person name="Minx P."/>
            <person name="Morris P."/>
            <person name="Nelson J."/>
            <person name="Phuntumart V."/>
            <person name="Qutob D."/>
            <person name="Rehmany A."/>
            <person name="Rougon-Cardoso A."/>
            <person name="Ryden P."/>
            <person name="Torto-Alalibo T."/>
            <person name="Studholme D."/>
            <person name="Wang Y."/>
            <person name="Win J."/>
            <person name="Wood J."/>
            <person name="Clifton S.W."/>
            <person name="Rogers J."/>
            <person name="Van den Ackerveken G."/>
            <person name="Jones J.D."/>
            <person name="McDowell J.M."/>
            <person name="Beynon J."/>
            <person name="Tyler B.M."/>
        </authorList>
    </citation>
    <scope>NUCLEOTIDE SEQUENCE [LARGE SCALE GENOMIC DNA]</scope>
    <source>
        <strain>Emoy2</strain>
    </source>
</reference>
<reference key="3">
    <citation type="submission" date="2015-06" db="UniProtKB">
        <authorList>
            <consortium name="EnsemblProtists"/>
        </authorList>
    </citation>
    <scope>IDENTIFICATION</scope>
    <source>
        <strain>Emoy2</strain>
    </source>
</reference>
<evidence type="ECO:0000255" key="1"/>
<evidence type="ECO:0000255" key="2">
    <source>
        <dbReference type="PROSITE-ProRule" id="PRU00498"/>
    </source>
</evidence>
<evidence type="ECO:0000256" key="3">
    <source>
        <dbReference type="SAM" id="MobiDB-lite"/>
    </source>
</evidence>
<evidence type="ECO:0000269" key="4">
    <source>
    </source>
</evidence>
<evidence type="ECO:0000303" key="5">
    <source>
    </source>
</evidence>
<evidence type="ECO:0000305" key="6"/>
<evidence type="ECO:0000305" key="7">
    <source>
    </source>
</evidence>
<protein>
    <recommendedName>
        <fullName evidence="5">Avirulence protein ATR5</fullName>
    </recommendedName>
    <alternativeName>
        <fullName evidence="5">Arabidopsis thaliana recognized protein 5</fullName>
    </alternativeName>
</protein>
<feature type="signal peptide" evidence="1">
    <location>
        <begin position="1"/>
        <end position="16"/>
    </location>
</feature>
<feature type="chain" id="PRO_0000447270" description="Avirulence protein ATR5">
    <location>
        <begin position="17"/>
        <end position="367"/>
    </location>
</feature>
<feature type="region of interest" description="Disordered" evidence="3">
    <location>
        <begin position="33"/>
        <end position="65"/>
    </location>
</feature>
<feature type="short sequence motif" description="dEER" evidence="7">
    <location>
        <begin position="61"/>
        <end position="64"/>
    </location>
</feature>
<feature type="compositionally biased region" description="Basic and acidic residues" evidence="3">
    <location>
        <begin position="54"/>
        <end position="65"/>
    </location>
</feature>
<feature type="glycosylation site" description="N-linked (GlcNAc...) asparagine" evidence="2">
    <location>
        <position position="20"/>
    </location>
</feature>
<sequence>MRLISPALVVSTAIQARHVNSSAPVDSAMTEANPLASAHPPDVGYDGVPAGRVRNPDDPTTEERTPGESFMEAINFKIFKLVQEAQGRILGLPEQPRGDMEWLERYGQDAILHYLETGDKDPSQLEKKYDQLLDELKNAPNLEVEILESIHALFLAYMEEVAKPAVQTTPKLNEQPDKFAWAMINKARRNAKPGIRNPYKSLNIPLVENYIKKYNAFIELRQRELTLLDTFSCAFNHNTVKLAKFLAMVDTFSPKRTFVLAMRIELSEIWIEEKRTIAEVASILGISTITGYAKNRLSAGTFVRFIYQLAKTNEQLGPDIVKDLVKTFGPDRTTELLTRMKTVSPRMFTILKDHMDVRLKETGVTPN</sequence>
<dbReference type="EMBL" id="FN598669">
    <property type="protein sequence ID" value="CBI63251.1"/>
    <property type="molecule type" value="mRNA"/>
</dbReference>
<dbReference type="EMBL" id="JH597955">
    <property type="status" value="NOT_ANNOTATED_CDS"/>
    <property type="molecule type" value="Genomic_DNA"/>
</dbReference>
<dbReference type="SMR" id="M4C699"/>
<dbReference type="GlyCosmos" id="M4C699">
    <property type="glycosylation" value="1 site, No reported glycans"/>
</dbReference>
<dbReference type="EnsemblProtists" id="HpaT814631">
    <property type="protein sequence ID" value="HpaP814631"/>
    <property type="gene ID" value="HpaG814631"/>
</dbReference>
<dbReference type="VEuPathDB" id="FungiDB:HpaG814631"/>
<dbReference type="HOGENOM" id="CLU_755352_0_0_1"/>
<dbReference type="InParanoid" id="M4C699"/>
<dbReference type="PHI-base" id="PHI:4735"/>
<dbReference type="Proteomes" id="UP000011713">
    <property type="component" value="Unassembled WGS sequence"/>
</dbReference>
<dbReference type="GO" id="GO:0005576">
    <property type="term" value="C:extracellular region"/>
    <property type="evidence" value="ECO:0007669"/>
    <property type="project" value="UniProtKB-SubCell"/>
</dbReference>
<dbReference type="GO" id="GO:0043657">
    <property type="term" value="C:host cell"/>
    <property type="evidence" value="ECO:0007669"/>
    <property type="project" value="UniProtKB-SubCell"/>
</dbReference>
<proteinExistence type="evidence at transcript level"/>